<organism>
    <name type="scientific">Nitrosomonas eutropha (strain DSM 101675 / C91 / Nm57)</name>
    <dbReference type="NCBI Taxonomy" id="335283"/>
    <lineage>
        <taxon>Bacteria</taxon>
        <taxon>Pseudomonadati</taxon>
        <taxon>Pseudomonadota</taxon>
        <taxon>Betaproteobacteria</taxon>
        <taxon>Nitrosomonadales</taxon>
        <taxon>Nitrosomonadaceae</taxon>
        <taxon>Nitrosomonas</taxon>
    </lineage>
</organism>
<keyword id="KW-0021">Allosteric enzyme</keyword>
<keyword id="KW-0963">Cytoplasm</keyword>
<keyword id="KW-0378">Hydrolase</keyword>
<keyword id="KW-0479">Metal-binding</keyword>
<keyword id="KW-0645">Protease</keyword>
<keyword id="KW-0915">Sodium</keyword>
<keyword id="KW-0888">Threonine protease</keyword>
<reference key="1">
    <citation type="journal article" date="2007" name="Environ. Microbiol.">
        <title>Whole-genome analysis of the ammonia-oxidizing bacterium, Nitrosomonas eutropha C91: implications for niche adaptation.</title>
        <authorList>
            <person name="Stein L.Y."/>
            <person name="Arp D.J."/>
            <person name="Berube P.M."/>
            <person name="Chain P.S."/>
            <person name="Hauser L."/>
            <person name="Jetten M.S."/>
            <person name="Klotz M.G."/>
            <person name="Larimer F.W."/>
            <person name="Norton J.M."/>
            <person name="Op den Camp H.J.M."/>
            <person name="Shin M."/>
            <person name="Wei X."/>
        </authorList>
    </citation>
    <scope>NUCLEOTIDE SEQUENCE [LARGE SCALE GENOMIC DNA]</scope>
    <source>
        <strain>DSM 101675 / C91 / Nm57</strain>
    </source>
</reference>
<sequence length="173" mass="18441">MTTIVSVRRGRQVALGGDGQVTLGAVVAKASARKVRRLYHDKVLAGFAGGTADAFTLFERFEAKLEKHQGHLLRSAVELAKDWRTDRILRRLEAMLVVADHEATLIITGAGDVIEPEQGLAAIGSGGAYAQAAARALLENTNLGPAETVAKALTIAGDICIYTNQVHVIEQLD</sequence>
<name>HSLV_NITEC</name>
<gene>
    <name evidence="1" type="primary">hslV</name>
    <name type="ordered locus">Neut_0612</name>
</gene>
<accession>Q0AD36</accession>
<comment type="function">
    <text evidence="1">Protease subunit of a proteasome-like degradation complex believed to be a general protein degrading machinery.</text>
</comment>
<comment type="catalytic activity">
    <reaction evidence="1">
        <text>ATP-dependent cleavage of peptide bonds with broad specificity.</text>
        <dbReference type="EC" id="3.4.25.2"/>
    </reaction>
</comment>
<comment type="activity regulation">
    <text evidence="1">Allosterically activated by HslU binding.</text>
</comment>
<comment type="subunit">
    <text evidence="1">A double ring-shaped homohexamer of HslV is capped on each side by a ring-shaped HslU homohexamer. The assembly of the HslU/HslV complex is dependent on binding of ATP.</text>
</comment>
<comment type="subcellular location">
    <subcellularLocation>
        <location evidence="1">Cytoplasm</location>
    </subcellularLocation>
</comment>
<comment type="similarity">
    <text evidence="1">Belongs to the peptidase T1B family. HslV subfamily.</text>
</comment>
<feature type="chain" id="PRO_1000012637" description="ATP-dependent protease subunit HslV">
    <location>
        <begin position="1"/>
        <end position="173"/>
    </location>
</feature>
<feature type="active site" evidence="1">
    <location>
        <position position="2"/>
    </location>
</feature>
<feature type="binding site" evidence="1">
    <location>
        <position position="157"/>
    </location>
    <ligand>
        <name>Na(+)</name>
        <dbReference type="ChEBI" id="CHEBI:29101"/>
    </ligand>
</feature>
<feature type="binding site" evidence="1">
    <location>
        <position position="160"/>
    </location>
    <ligand>
        <name>Na(+)</name>
        <dbReference type="ChEBI" id="CHEBI:29101"/>
    </ligand>
</feature>
<feature type="binding site" evidence="1">
    <location>
        <position position="163"/>
    </location>
    <ligand>
        <name>Na(+)</name>
        <dbReference type="ChEBI" id="CHEBI:29101"/>
    </ligand>
</feature>
<proteinExistence type="inferred from homology"/>
<dbReference type="EC" id="3.4.25.2" evidence="1"/>
<dbReference type="EMBL" id="CP000450">
    <property type="protein sequence ID" value="ABI58884.1"/>
    <property type="molecule type" value="Genomic_DNA"/>
</dbReference>
<dbReference type="RefSeq" id="WP_011633725.1">
    <property type="nucleotide sequence ID" value="NC_008344.1"/>
</dbReference>
<dbReference type="SMR" id="Q0AD36"/>
<dbReference type="STRING" id="335283.Neut_0612"/>
<dbReference type="MEROPS" id="T01.007"/>
<dbReference type="KEGG" id="net:Neut_0612"/>
<dbReference type="eggNOG" id="COG5405">
    <property type="taxonomic scope" value="Bacteria"/>
</dbReference>
<dbReference type="HOGENOM" id="CLU_093872_1_0_4"/>
<dbReference type="OrthoDB" id="9804884at2"/>
<dbReference type="Proteomes" id="UP000001966">
    <property type="component" value="Chromosome"/>
</dbReference>
<dbReference type="GO" id="GO:0009376">
    <property type="term" value="C:HslUV protease complex"/>
    <property type="evidence" value="ECO:0007669"/>
    <property type="project" value="UniProtKB-UniRule"/>
</dbReference>
<dbReference type="GO" id="GO:0005839">
    <property type="term" value="C:proteasome core complex"/>
    <property type="evidence" value="ECO:0007669"/>
    <property type="project" value="InterPro"/>
</dbReference>
<dbReference type="GO" id="GO:0046872">
    <property type="term" value="F:metal ion binding"/>
    <property type="evidence" value="ECO:0007669"/>
    <property type="project" value="UniProtKB-KW"/>
</dbReference>
<dbReference type="GO" id="GO:0004298">
    <property type="term" value="F:threonine-type endopeptidase activity"/>
    <property type="evidence" value="ECO:0007669"/>
    <property type="project" value="UniProtKB-KW"/>
</dbReference>
<dbReference type="GO" id="GO:0051603">
    <property type="term" value="P:proteolysis involved in protein catabolic process"/>
    <property type="evidence" value="ECO:0007669"/>
    <property type="project" value="InterPro"/>
</dbReference>
<dbReference type="CDD" id="cd01913">
    <property type="entry name" value="protease_HslV"/>
    <property type="match status" value="1"/>
</dbReference>
<dbReference type="FunFam" id="3.60.20.10:FF:000002">
    <property type="entry name" value="ATP-dependent protease subunit HslV"/>
    <property type="match status" value="1"/>
</dbReference>
<dbReference type="Gene3D" id="3.60.20.10">
    <property type="entry name" value="Glutamine Phosphoribosylpyrophosphate, subunit 1, domain 1"/>
    <property type="match status" value="1"/>
</dbReference>
<dbReference type="HAMAP" id="MF_00248">
    <property type="entry name" value="HslV"/>
    <property type="match status" value="1"/>
</dbReference>
<dbReference type="InterPro" id="IPR022281">
    <property type="entry name" value="ATP-dep_Prtase_HsIV_su"/>
</dbReference>
<dbReference type="InterPro" id="IPR029055">
    <property type="entry name" value="Ntn_hydrolases_N"/>
</dbReference>
<dbReference type="InterPro" id="IPR001353">
    <property type="entry name" value="Proteasome_sua/b"/>
</dbReference>
<dbReference type="InterPro" id="IPR023333">
    <property type="entry name" value="Proteasome_suB-type"/>
</dbReference>
<dbReference type="NCBIfam" id="TIGR03692">
    <property type="entry name" value="ATP_dep_HslV"/>
    <property type="match status" value="1"/>
</dbReference>
<dbReference type="NCBIfam" id="NF003964">
    <property type="entry name" value="PRK05456.1"/>
    <property type="match status" value="1"/>
</dbReference>
<dbReference type="PANTHER" id="PTHR32194:SF0">
    <property type="entry name" value="ATP-DEPENDENT PROTEASE SUBUNIT HSLV"/>
    <property type="match status" value="1"/>
</dbReference>
<dbReference type="PANTHER" id="PTHR32194">
    <property type="entry name" value="METALLOPROTEASE TLDD"/>
    <property type="match status" value="1"/>
</dbReference>
<dbReference type="Pfam" id="PF00227">
    <property type="entry name" value="Proteasome"/>
    <property type="match status" value="1"/>
</dbReference>
<dbReference type="PIRSF" id="PIRSF039093">
    <property type="entry name" value="HslV"/>
    <property type="match status" value="1"/>
</dbReference>
<dbReference type="SUPFAM" id="SSF56235">
    <property type="entry name" value="N-terminal nucleophile aminohydrolases (Ntn hydrolases)"/>
    <property type="match status" value="1"/>
</dbReference>
<dbReference type="PROSITE" id="PS51476">
    <property type="entry name" value="PROTEASOME_BETA_2"/>
    <property type="match status" value="1"/>
</dbReference>
<evidence type="ECO:0000255" key="1">
    <source>
        <dbReference type="HAMAP-Rule" id="MF_00248"/>
    </source>
</evidence>
<protein>
    <recommendedName>
        <fullName evidence="1">ATP-dependent protease subunit HslV</fullName>
        <ecNumber evidence="1">3.4.25.2</ecNumber>
    </recommendedName>
</protein>